<keyword id="KW-0963">Cytoplasm</keyword>
<keyword id="KW-0489">Methyltransferase</keyword>
<keyword id="KW-1185">Reference proteome</keyword>
<keyword id="KW-0698">rRNA processing</keyword>
<keyword id="KW-0949">S-adenosyl-L-methionine</keyword>
<keyword id="KW-0808">Transferase</keyword>
<accession>Q8ZIV4</accession>
<accession>Q0WJS9</accession>
<accession>Q74XA9</accession>
<accession>Q7CKL7</accession>
<reference key="1">
    <citation type="journal article" date="2001" name="Nature">
        <title>Genome sequence of Yersinia pestis, the causative agent of plague.</title>
        <authorList>
            <person name="Parkhill J."/>
            <person name="Wren B.W."/>
            <person name="Thomson N.R."/>
            <person name="Titball R.W."/>
            <person name="Holden M.T.G."/>
            <person name="Prentice M.B."/>
            <person name="Sebaihia M."/>
            <person name="James K.D."/>
            <person name="Churcher C.M."/>
            <person name="Mungall K.L."/>
            <person name="Baker S."/>
            <person name="Basham D."/>
            <person name="Bentley S.D."/>
            <person name="Brooks K."/>
            <person name="Cerdeno-Tarraga A.-M."/>
            <person name="Chillingworth T."/>
            <person name="Cronin A."/>
            <person name="Davies R.M."/>
            <person name="Davis P."/>
            <person name="Dougan G."/>
            <person name="Feltwell T."/>
            <person name="Hamlin N."/>
            <person name="Holroyd S."/>
            <person name="Jagels K."/>
            <person name="Karlyshev A.V."/>
            <person name="Leather S."/>
            <person name="Moule S."/>
            <person name="Oyston P.C.F."/>
            <person name="Quail M.A."/>
            <person name="Rutherford K.M."/>
            <person name="Simmonds M."/>
            <person name="Skelton J."/>
            <person name="Stevens K."/>
            <person name="Whitehead S."/>
            <person name="Barrell B.G."/>
        </authorList>
    </citation>
    <scope>NUCLEOTIDE SEQUENCE [LARGE SCALE GENOMIC DNA]</scope>
    <source>
        <strain>CO-92 / Biovar Orientalis</strain>
    </source>
</reference>
<reference key="2">
    <citation type="journal article" date="2002" name="J. Bacteriol.">
        <title>Genome sequence of Yersinia pestis KIM.</title>
        <authorList>
            <person name="Deng W."/>
            <person name="Burland V."/>
            <person name="Plunkett G. III"/>
            <person name="Boutin A."/>
            <person name="Mayhew G.F."/>
            <person name="Liss P."/>
            <person name="Perna N.T."/>
            <person name="Rose D.J."/>
            <person name="Mau B."/>
            <person name="Zhou S."/>
            <person name="Schwartz D.C."/>
            <person name="Fetherston J.D."/>
            <person name="Lindler L.E."/>
            <person name="Brubaker R.R."/>
            <person name="Plano G.V."/>
            <person name="Straley S.C."/>
            <person name="McDonough K.A."/>
            <person name="Nilles M.L."/>
            <person name="Matson J.S."/>
            <person name="Blattner F.R."/>
            <person name="Perry R.D."/>
        </authorList>
    </citation>
    <scope>NUCLEOTIDE SEQUENCE [LARGE SCALE GENOMIC DNA]</scope>
    <source>
        <strain>KIM10+ / Biovar Mediaevalis</strain>
    </source>
</reference>
<reference key="3">
    <citation type="journal article" date="2004" name="DNA Res.">
        <title>Complete genome sequence of Yersinia pestis strain 91001, an isolate avirulent to humans.</title>
        <authorList>
            <person name="Song Y."/>
            <person name="Tong Z."/>
            <person name="Wang J."/>
            <person name="Wang L."/>
            <person name="Guo Z."/>
            <person name="Han Y."/>
            <person name="Zhang J."/>
            <person name="Pei D."/>
            <person name="Zhou D."/>
            <person name="Qin H."/>
            <person name="Pang X."/>
            <person name="Han Y."/>
            <person name="Zhai J."/>
            <person name="Li M."/>
            <person name="Cui B."/>
            <person name="Qi Z."/>
            <person name="Jin L."/>
            <person name="Dai R."/>
            <person name="Chen F."/>
            <person name="Li S."/>
            <person name="Ye C."/>
            <person name="Du Z."/>
            <person name="Lin W."/>
            <person name="Wang J."/>
            <person name="Yu J."/>
            <person name="Yang H."/>
            <person name="Wang J."/>
            <person name="Huang P."/>
            <person name="Yang R."/>
        </authorList>
    </citation>
    <scope>NUCLEOTIDE SEQUENCE [LARGE SCALE GENOMIC DNA]</scope>
    <source>
        <strain>91001 / Biovar Mediaevalis</strain>
    </source>
</reference>
<protein>
    <recommendedName>
        <fullName evidence="1">23S rRNA (guanosine-2'-O-)-methyltransferase RlmB</fullName>
        <ecNumber evidence="1">2.1.1.185</ecNumber>
    </recommendedName>
    <alternativeName>
        <fullName evidence="1">23S rRNA (guanosine2251 2'-O)-methyltransferase</fullName>
    </alternativeName>
    <alternativeName>
        <fullName evidence="1">23S rRNA Gm2251 2'-O-methyltransferase</fullName>
    </alternativeName>
</protein>
<feature type="chain" id="PRO_0000159813" description="23S rRNA (guanosine-2'-O-)-methyltransferase RlmB">
    <location>
        <begin position="1"/>
        <end position="246"/>
    </location>
</feature>
<feature type="binding site" evidence="1">
    <location>
        <position position="196"/>
    </location>
    <ligand>
        <name>S-adenosyl-L-methionine</name>
        <dbReference type="ChEBI" id="CHEBI:59789"/>
    </ligand>
</feature>
<feature type="binding site" evidence="1">
    <location>
        <position position="216"/>
    </location>
    <ligand>
        <name>S-adenosyl-L-methionine</name>
        <dbReference type="ChEBI" id="CHEBI:59789"/>
    </ligand>
</feature>
<feature type="binding site" evidence="1">
    <location>
        <position position="225"/>
    </location>
    <ligand>
        <name>S-adenosyl-L-methionine</name>
        <dbReference type="ChEBI" id="CHEBI:59789"/>
    </ligand>
</feature>
<organism>
    <name type="scientific">Yersinia pestis</name>
    <dbReference type="NCBI Taxonomy" id="632"/>
    <lineage>
        <taxon>Bacteria</taxon>
        <taxon>Pseudomonadati</taxon>
        <taxon>Pseudomonadota</taxon>
        <taxon>Gammaproteobacteria</taxon>
        <taxon>Enterobacterales</taxon>
        <taxon>Yersiniaceae</taxon>
        <taxon>Yersinia</taxon>
    </lineage>
</organism>
<dbReference type="EC" id="2.1.1.185" evidence="1"/>
<dbReference type="EMBL" id="AL590842">
    <property type="protein sequence ID" value="CAL19063.1"/>
    <property type="molecule type" value="Genomic_DNA"/>
</dbReference>
<dbReference type="EMBL" id="AE009952">
    <property type="protein sequence ID" value="AAM84226.1"/>
    <property type="molecule type" value="Genomic_DNA"/>
</dbReference>
<dbReference type="EMBL" id="AE017042">
    <property type="protein sequence ID" value="AAS60807.1"/>
    <property type="molecule type" value="Genomic_DNA"/>
</dbReference>
<dbReference type="PIR" id="AE0047">
    <property type="entry name" value="AE0047"/>
</dbReference>
<dbReference type="RefSeq" id="WP_002209161.1">
    <property type="nucleotide sequence ID" value="NZ_WUCM01000083.1"/>
</dbReference>
<dbReference type="RefSeq" id="YP_002345459.1">
    <property type="nucleotide sequence ID" value="NC_003143.1"/>
</dbReference>
<dbReference type="SMR" id="Q8ZIV4"/>
<dbReference type="STRING" id="214092.YPO0381"/>
<dbReference type="PaxDb" id="214092-YPO0381"/>
<dbReference type="DNASU" id="1145585"/>
<dbReference type="EnsemblBacteria" id="AAS60807">
    <property type="protein sequence ID" value="AAS60807"/>
    <property type="gene ID" value="YP_0537"/>
</dbReference>
<dbReference type="GeneID" id="57974226"/>
<dbReference type="KEGG" id="ype:YPO0381"/>
<dbReference type="KEGG" id="ypk:y0638"/>
<dbReference type="KEGG" id="ypm:YP_0537"/>
<dbReference type="PATRIC" id="fig|214092.21.peg.619"/>
<dbReference type="eggNOG" id="COG0566">
    <property type="taxonomic scope" value="Bacteria"/>
</dbReference>
<dbReference type="HOGENOM" id="CLU_021322_0_1_6"/>
<dbReference type="OMA" id="QVPPYEY"/>
<dbReference type="OrthoDB" id="9785673at2"/>
<dbReference type="Proteomes" id="UP000000815">
    <property type="component" value="Chromosome"/>
</dbReference>
<dbReference type="Proteomes" id="UP000001019">
    <property type="component" value="Chromosome"/>
</dbReference>
<dbReference type="Proteomes" id="UP000002490">
    <property type="component" value="Chromosome"/>
</dbReference>
<dbReference type="GO" id="GO:0005829">
    <property type="term" value="C:cytosol"/>
    <property type="evidence" value="ECO:0000318"/>
    <property type="project" value="GO_Central"/>
</dbReference>
<dbReference type="GO" id="GO:0003723">
    <property type="term" value="F:RNA binding"/>
    <property type="evidence" value="ECO:0007669"/>
    <property type="project" value="InterPro"/>
</dbReference>
<dbReference type="GO" id="GO:0070039">
    <property type="term" value="F:rRNA (guanosine-2'-O-)-methyltransferase activity"/>
    <property type="evidence" value="ECO:0000318"/>
    <property type="project" value="GO_Central"/>
</dbReference>
<dbReference type="CDD" id="cd18103">
    <property type="entry name" value="SpoU-like_RlmB"/>
    <property type="match status" value="1"/>
</dbReference>
<dbReference type="FunFam" id="3.40.1280.10:FF:000005">
    <property type="entry name" value="23S rRNA (guanosine-2'-O-)-methyltransferase RlmB"/>
    <property type="match status" value="1"/>
</dbReference>
<dbReference type="FunFam" id="3.30.1330.30:FF:000007">
    <property type="entry name" value="23S rRNA methyltransferase"/>
    <property type="match status" value="1"/>
</dbReference>
<dbReference type="Gene3D" id="3.30.1330.30">
    <property type="match status" value="1"/>
</dbReference>
<dbReference type="Gene3D" id="3.40.1280.10">
    <property type="match status" value="1"/>
</dbReference>
<dbReference type="HAMAP" id="MF_01887">
    <property type="entry name" value="23SrRNA_methyltr_B"/>
    <property type="match status" value="1"/>
</dbReference>
<dbReference type="InterPro" id="IPR024915">
    <property type="entry name" value="23S_rRNA_MeTrfase_RlmB"/>
</dbReference>
<dbReference type="InterPro" id="IPR029028">
    <property type="entry name" value="Alpha/beta_knot_MTases"/>
</dbReference>
<dbReference type="InterPro" id="IPR029064">
    <property type="entry name" value="Ribosomal_eL30-like_sf"/>
</dbReference>
<dbReference type="InterPro" id="IPR004441">
    <property type="entry name" value="rRNA_MeTrfase_TrmH"/>
</dbReference>
<dbReference type="InterPro" id="IPR001537">
    <property type="entry name" value="SpoU_MeTrfase"/>
</dbReference>
<dbReference type="InterPro" id="IPR013123">
    <property type="entry name" value="SpoU_subst-bd"/>
</dbReference>
<dbReference type="InterPro" id="IPR029026">
    <property type="entry name" value="tRNA_m1G_MTases_N"/>
</dbReference>
<dbReference type="NCBIfam" id="NF008386">
    <property type="entry name" value="PRK11181.1"/>
    <property type="match status" value="1"/>
</dbReference>
<dbReference type="NCBIfam" id="TIGR00186">
    <property type="entry name" value="rRNA_methyl_3"/>
    <property type="match status" value="1"/>
</dbReference>
<dbReference type="PANTHER" id="PTHR46429">
    <property type="entry name" value="23S RRNA (GUANOSINE-2'-O-)-METHYLTRANSFERASE RLMB"/>
    <property type="match status" value="1"/>
</dbReference>
<dbReference type="PANTHER" id="PTHR46429:SF1">
    <property type="entry name" value="23S RRNA (GUANOSINE-2'-O-)-METHYLTRANSFERASE RLMB"/>
    <property type="match status" value="1"/>
</dbReference>
<dbReference type="Pfam" id="PF00588">
    <property type="entry name" value="SpoU_methylase"/>
    <property type="match status" value="1"/>
</dbReference>
<dbReference type="Pfam" id="PF08032">
    <property type="entry name" value="SpoU_sub_bind"/>
    <property type="match status" value="1"/>
</dbReference>
<dbReference type="SMART" id="SM00967">
    <property type="entry name" value="SpoU_sub_bind"/>
    <property type="match status" value="1"/>
</dbReference>
<dbReference type="SUPFAM" id="SSF75217">
    <property type="entry name" value="alpha/beta knot"/>
    <property type="match status" value="1"/>
</dbReference>
<dbReference type="SUPFAM" id="SSF55315">
    <property type="entry name" value="L30e-like"/>
    <property type="match status" value="1"/>
</dbReference>
<name>RLMB_YERPE</name>
<comment type="function">
    <text evidence="1">Specifically methylates the ribose of guanosine 2251 in 23S rRNA.</text>
</comment>
<comment type="catalytic activity">
    <reaction evidence="1">
        <text>guanosine(2251) in 23S rRNA + S-adenosyl-L-methionine = 2'-O-methylguanosine(2251) in 23S rRNA + S-adenosyl-L-homocysteine + H(+)</text>
        <dbReference type="Rhea" id="RHEA:24140"/>
        <dbReference type="Rhea" id="RHEA-COMP:10239"/>
        <dbReference type="Rhea" id="RHEA-COMP:10241"/>
        <dbReference type="ChEBI" id="CHEBI:15378"/>
        <dbReference type="ChEBI" id="CHEBI:57856"/>
        <dbReference type="ChEBI" id="CHEBI:59789"/>
        <dbReference type="ChEBI" id="CHEBI:74269"/>
        <dbReference type="ChEBI" id="CHEBI:74445"/>
        <dbReference type="EC" id="2.1.1.185"/>
    </reaction>
</comment>
<comment type="subunit">
    <text evidence="1">Homodimer.</text>
</comment>
<comment type="subcellular location">
    <subcellularLocation>
        <location evidence="1">Cytoplasm</location>
    </subcellularLocation>
</comment>
<comment type="similarity">
    <text evidence="1">Belongs to the class IV-like SAM-binding methyltransferase superfamily. RNA methyltransferase TrmH family. RlmB subfamily.</text>
</comment>
<gene>
    <name evidence="1" type="primary">rlmB</name>
    <name type="synonym">spoU</name>
    <name type="ordered locus">YPO0381</name>
    <name type="ordered locus">y0638</name>
    <name type="ordered locus">YP_0537</name>
</gene>
<sequence>MSEIIYGIHAVKALLERDPQRFLEVFILKGRDDRRLQPLIAELEAAGLVIQVASRQWLDSQVEGGVHQGIVARVREGRQYQENDLPALLESVETPFLLVLDGVTDPHNLGACLRSADAAGVHAVIVPRDRSAQLNAIAKKVASGAAENVPLIKVTNLARTLRVLQEHNVWIVGTAGEADHTLYQSKMTGPMALVMGAEGEGMRRLTREHCDELISIPMAGSVSSLNVSVATGVCLFEVVRQRGLKA</sequence>
<proteinExistence type="inferred from homology"/>
<evidence type="ECO:0000255" key="1">
    <source>
        <dbReference type="HAMAP-Rule" id="MF_01887"/>
    </source>
</evidence>